<keyword id="KW-0963">Cytoplasm</keyword>
<keyword id="KW-0396">Initiation factor</keyword>
<keyword id="KW-0648">Protein biosynthesis</keyword>
<keyword id="KW-0694">RNA-binding</keyword>
<keyword id="KW-0699">rRNA-binding</keyword>
<protein>
    <recommendedName>
        <fullName evidence="1">Translation initiation factor IF-1</fullName>
    </recommendedName>
</protein>
<comment type="function">
    <text evidence="1">One of the essential components for the initiation of protein synthesis. Stabilizes the binding of IF-2 and IF-3 on the 30S subunit to which N-formylmethionyl-tRNA(fMet) subsequently binds. Helps modulate mRNA selection, yielding the 30S pre-initiation complex (PIC). Upon addition of the 50S ribosomal subunit IF-1, IF-2 and IF-3 are released leaving the mature 70S translation initiation complex.</text>
</comment>
<comment type="subunit">
    <text evidence="1">Component of the 30S ribosomal translation pre-initiation complex which assembles on the 30S ribosome in the order IF-2 and IF-3, IF-1 and N-formylmethionyl-tRNA(fMet); mRNA recruitment can occur at any time during PIC assembly.</text>
</comment>
<comment type="subcellular location">
    <subcellularLocation>
        <location evidence="1">Cytoplasm</location>
    </subcellularLocation>
</comment>
<comment type="similarity">
    <text evidence="1">Belongs to the IF-1 family.</text>
</comment>
<dbReference type="EMBL" id="CP000308">
    <property type="protein sequence ID" value="ABG12628.1"/>
    <property type="molecule type" value="Genomic_DNA"/>
</dbReference>
<dbReference type="RefSeq" id="WP_002211347.1">
    <property type="nucleotide sequence ID" value="NZ_CP009906.1"/>
</dbReference>
<dbReference type="SMR" id="Q1CA94"/>
<dbReference type="GeneID" id="98387575"/>
<dbReference type="KEGG" id="ypa:YPA_0660"/>
<dbReference type="Proteomes" id="UP000001971">
    <property type="component" value="Chromosome"/>
</dbReference>
<dbReference type="GO" id="GO:0005829">
    <property type="term" value="C:cytosol"/>
    <property type="evidence" value="ECO:0007669"/>
    <property type="project" value="TreeGrafter"/>
</dbReference>
<dbReference type="GO" id="GO:0043022">
    <property type="term" value="F:ribosome binding"/>
    <property type="evidence" value="ECO:0007669"/>
    <property type="project" value="UniProtKB-UniRule"/>
</dbReference>
<dbReference type="GO" id="GO:0019843">
    <property type="term" value="F:rRNA binding"/>
    <property type="evidence" value="ECO:0007669"/>
    <property type="project" value="UniProtKB-UniRule"/>
</dbReference>
<dbReference type="GO" id="GO:0003743">
    <property type="term" value="F:translation initiation factor activity"/>
    <property type="evidence" value="ECO:0007669"/>
    <property type="project" value="UniProtKB-UniRule"/>
</dbReference>
<dbReference type="CDD" id="cd04451">
    <property type="entry name" value="S1_IF1"/>
    <property type="match status" value="1"/>
</dbReference>
<dbReference type="FunFam" id="2.40.50.140:FF:000002">
    <property type="entry name" value="Translation initiation factor IF-1"/>
    <property type="match status" value="1"/>
</dbReference>
<dbReference type="Gene3D" id="2.40.50.140">
    <property type="entry name" value="Nucleic acid-binding proteins"/>
    <property type="match status" value="1"/>
</dbReference>
<dbReference type="HAMAP" id="MF_00075">
    <property type="entry name" value="IF_1"/>
    <property type="match status" value="1"/>
</dbReference>
<dbReference type="InterPro" id="IPR012340">
    <property type="entry name" value="NA-bd_OB-fold"/>
</dbReference>
<dbReference type="InterPro" id="IPR006196">
    <property type="entry name" value="RNA-binding_domain_S1_IF1"/>
</dbReference>
<dbReference type="InterPro" id="IPR003029">
    <property type="entry name" value="S1_domain"/>
</dbReference>
<dbReference type="InterPro" id="IPR004368">
    <property type="entry name" value="TIF_IF1"/>
</dbReference>
<dbReference type="NCBIfam" id="TIGR00008">
    <property type="entry name" value="infA"/>
    <property type="match status" value="1"/>
</dbReference>
<dbReference type="PANTHER" id="PTHR33370">
    <property type="entry name" value="TRANSLATION INITIATION FACTOR IF-1, CHLOROPLASTIC"/>
    <property type="match status" value="1"/>
</dbReference>
<dbReference type="PANTHER" id="PTHR33370:SF1">
    <property type="entry name" value="TRANSLATION INITIATION FACTOR IF-1, CHLOROPLASTIC"/>
    <property type="match status" value="1"/>
</dbReference>
<dbReference type="Pfam" id="PF01176">
    <property type="entry name" value="eIF-1a"/>
    <property type="match status" value="1"/>
</dbReference>
<dbReference type="SMART" id="SM00316">
    <property type="entry name" value="S1"/>
    <property type="match status" value="1"/>
</dbReference>
<dbReference type="SUPFAM" id="SSF50249">
    <property type="entry name" value="Nucleic acid-binding proteins"/>
    <property type="match status" value="1"/>
</dbReference>
<dbReference type="PROSITE" id="PS50832">
    <property type="entry name" value="S1_IF1_TYPE"/>
    <property type="match status" value="1"/>
</dbReference>
<sequence>MAKEDNIEMQGTVLDTLPNTMFRVELENGHVVTAHISGKMRKNYIRILTGDKVTVELTPYDLSKGRIVFRSR</sequence>
<proteinExistence type="inferred from homology"/>
<organism>
    <name type="scientific">Yersinia pestis bv. Antiqua (strain Antiqua)</name>
    <dbReference type="NCBI Taxonomy" id="360102"/>
    <lineage>
        <taxon>Bacteria</taxon>
        <taxon>Pseudomonadati</taxon>
        <taxon>Pseudomonadota</taxon>
        <taxon>Gammaproteobacteria</taxon>
        <taxon>Enterobacterales</taxon>
        <taxon>Yersiniaceae</taxon>
        <taxon>Yersinia</taxon>
    </lineage>
</organism>
<gene>
    <name evidence="1" type="primary">infA</name>
    <name type="ordered locus">YPA_0660</name>
</gene>
<evidence type="ECO:0000255" key="1">
    <source>
        <dbReference type="HAMAP-Rule" id="MF_00075"/>
    </source>
</evidence>
<feature type="chain" id="PRO_0000263900" description="Translation initiation factor IF-1">
    <location>
        <begin position="1"/>
        <end position="72"/>
    </location>
</feature>
<feature type="domain" description="S1-like" evidence="1">
    <location>
        <begin position="1"/>
        <end position="72"/>
    </location>
</feature>
<name>IF1_YERPA</name>
<reference key="1">
    <citation type="journal article" date="2006" name="J. Bacteriol.">
        <title>Complete genome sequence of Yersinia pestis strains Antiqua and Nepal516: evidence of gene reduction in an emerging pathogen.</title>
        <authorList>
            <person name="Chain P.S.G."/>
            <person name="Hu P."/>
            <person name="Malfatti S.A."/>
            <person name="Radnedge L."/>
            <person name="Larimer F."/>
            <person name="Vergez L.M."/>
            <person name="Worsham P."/>
            <person name="Chu M.C."/>
            <person name="Andersen G.L."/>
        </authorList>
    </citation>
    <scope>NUCLEOTIDE SEQUENCE [LARGE SCALE GENOMIC DNA]</scope>
    <source>
        <strain>Antiqua</strain>
    </source>
</reference>
<accession>Q1CA94</accession>